<sequence length="349" mass="39036">MGDMGDPPKKKRLISLCVGCGNQIHDQYILRVSPDLEWHAACLKCAECNQYLDESCTCFVRDGKTYCKRDYIRLYGIKCAKCSIGFSKNDFVMRARSKVYHIECFRCVACSRQLIPGDEFALREDGLFCRADHDVVERASLGAGDPLSPLHPARPLQMAAEPISARQPALRPHVHKQPEKTTRVRTVLNEKQLHTLRTCYAANPRPDALMKEQLVEMTGLSPRVIRVWFQNKRCKDKKRSIMMKQLQQQQPNDKTNIQGMTGTPMVAASPERHDGGLQANPVEVQSYQPPWKVLSDFALQSDIDQPAFQQLVNFSEGGPGSNSTGSEVASMSSQLPDTPNSMVASPIEA</sequence>
<organism>
    <name type="scientific">Mus musculus</name>
    <name type="common">Mouse</name>
    <dbReference type="NCBI Taxonomy" id="10090"/>
    <lineage>
        <taxon>Eukaryota</taxon>
        <taxon>Metazoa</taxon>
        <taxon>Chordata</taxon>
        <taxon>Craniata</taxon>
        <taxon>Vertebrata</taxon>
        <taxon>Euteleostomi</taxon>
        <taxon>Mammalia</taxon>
        <taxon>Eutheria</taxon>
        <taxon>Euarchontoglires</taxon>
        <taxon>Glires</taxon>
        <taxon>Rodentia</taxon>
        <taxon>Myomorpha</taxon>
        <taxon>Muroidea</taxon>
        <taxon>Muridae</taxon>
        <taxon>Murinae</taxon>
        <taxon>Mus</taxon>
        <taxon>Mus</taxon>
    </lineage>
</organism>
<proteinExistence type="evidence at protein level"/>
<keyword id="KW-0002">3D-structure</keyword>
<keyword id="KW-0010">Activator</keyword>
<keyword id="KW-0025">Alternative splicing</keyword>
<keyword id="KW-0217">Developmental protein</keyword>
<keyword id="KW-0221">Differentiation</keyword>
<keyword id="KW-0238">DNA-binding</keyword>
<keyword id="KW-0371">Homeobox</keyword>
<keyword id="KW-0440">LIM domain</keyword>
<keyword id="KW-0479">Metal-binding</keyword>
<keyword id="KW-0539">Nucleus</keyword>
<keyword id="KW-0597">Phosphoprotein</keyword>
<keyword id="KW-1185">Reference proteome</keyword>
<keyword id="KW-0677">Repeat</keyword>
<keyword id="KW-0804">Transcription</keyword>
<keyword id="KW-0805">Transcription regulation</keyword>
<keyword id="KW-0832">Ubl conjugation</keyword>
<keyword id="KW-0862">Zinc</keyword>
<gene>
    <name type="primary">Isl1</name>
</gene>
<feature type="chain" id="PRO_0000075748" description="Insulin gene enhancer protein ISL-1">
    <location>
        <begin position="1"/>
        <end position="349"/>
    </location>
</feature>
<feature type="domain" description="LIM zinc-binding 1" evidence="3">
    <location>
        <begin position="17"/>
        <end position="70"/>
    </location>
</feature>
<feature type="domain" description="LIM zinc-binding 2" evidence="3">
    <location>
        <begin position="79"/>
        <end position="133"/>
    </location>
</feature>
<feature type="DNA-binding region" description="Homeobox" evidence="2">
    <location>
        <begin position="181"/>
        <end position="240"/>
    </location>
</feature>
<feature type="region of interest" description="LIM-binding domain (LID)">
    <location>
        <begin position="262"/>
        <end position="291"/>
    </location>
</feature>
<feature type="region of interest" description="Disordered" evidence="4">
    <location>
        <begin position="312"/>
        <end position="349"/>
    </location>
</feature>
<feature type="compositionally biased region" description="Polar residues" evidence="4">
    <location>
        <begin position="321"/>
        <end position="343"/>
    </location>
</feature>
<feature type="splice variant" id="VSP_010338" description="In isoform 2." evidence="12">
    <location>
        <begin position="256"/>
        <end position="278"/>
    </location>
</feature>
<feature type="turn" evidence="14">
    <location>
        <begin position="18"/>
        <end position="20"/>
    </location>
</feature>
<feature type="strand" evidence="14">
    <location>
        <begin position="26"/>
        <end position="32"/>
    </location>
</feature>
<feature type="turn" evidence="14">
    <location>
        <begin position="33"/>
        <end position="35"/>
    </location>
</feature>
<feature type="strand" evidence="14">
    <location>
        <begin position="36"/>
        <end position="38"/>
    </location>
</feature>
<feature type="helix" evidence="14">
    <location>
        <begin position="40"/>
        <end position="42"/>
    </location>
</feature>
<feature type="turn" evidence="14">
    <location>
        <begin position="46"/>
        <end position="48"/>
    </location>
</feature>
<feature type="helix" evidence="14">
    <location>
        <begin position="52"/>
        <end position="54"/>
    </location>
</feature>
<feature type="strand" evidence="14">
    <location>
        <begin position="55"/>
        <end position="61"/>
    </location>
</feature>
<feature type="strand" evidence="14">
    <location>
        <begin position="64"/>
        <end position="66"/>
    </location>
</feature>
<feature type="helix" evidence="14">
    <location>
        <begin position="68"/>
        <end position="74"/>
    </location>
</feature>
<feature type="turn" evidence="14">
    <location>
        <begin position="80"/>
        <end position="82"/>
    </location>
</feature>
<feature type="strand" evidence="14">
    <location>
        <begin position="91"/>
        <end position="95"/>
    </location>
</feature>
<feature type="strand" evidence="14">
    <location>
        <begin position="98"/>
        <end position="101"/>
    </location>
</feature>
<feature type="helix" evidence="14">
    <location>
        <begin position="102"/>
        <end position="104"/>
    </location>
</feature>
<feature type="turn" evidence="14">
    <location>
        <begin position="108"/>
        <end position="110"/>
    </location>
</feature>
<feature type="strand" evidence="14">
    <location>
        <begin position="119"/>
        <end position="122"/>
    </location>
</feature>
<feature type="strand" evidence="14">
    <location>
        <begin position="127"/>
        <end position="129"/>
    </location>
</feature>
<feature type="turn" evidence="14">
    <location>
        <begin position="130"/>
        <end position="132"/>
    </location>
</feature>
<feature type="strand" evidence="13">
    <location>
        <begin position="145"/>
        <end position="148"/>
    </location>
</feature>
<comment type="function">
    <text evidence="1 5 6 7 8 9 10">DNA-binding transcriptional activator (PubMed:14664703, PubMed:18539116, PubMed:22343712, PubMed:24643061, PubMed:25775587). Recognizes and binds to the consensus octamer binding site 5'-ATAATTAA-3' in promoter of target genes (PubMed:18539116, PubMed:24643061, PubMed:25775587). Plays a fundamental role in the gene regulatory network essential for retinal ganglion cell (RGC) differentiation (PubMed:25775587). Cooperates with the transcription factor POU4F2 to achieve maximal levels of expression of RGC target genes and RGC fate specification in the developing retina (PubMed:24643061, PubMed:25775587). Involved in the specification of motor neurons in cooperation with LHX3 and LDB1 (PubMed:18583962). Binds to insulin gene enhancer sequences (By similarity). Essential for heart development. Marker of one progenitor cell population that give rise to the outflow tract, right ventricle, a subset of left ventricular cells, and a large number of atrial cells as well, its function is required for these progenitors to contribute to the heart. Controls the expression of FGF and BMP growth factors in this cell population and is required for proliferation and survival of cells within pharyngeal foregut endoderm and adjacent splanchnic mesoderm as well as for migration of cardiac progenitors into the heart (PubMed:14667410).</text>
</comment>
<comment type="subunit">
    <text evidence="7 8 9 11">At neuronal promoters, displaces LDB1 from LHX3 LIM domain to form a ternary complex in which ISL1 contacts both LHX3 and LDB1; allosteric structural changes in the DNA binding domain of LHX3, induced by the ISL1:LHX3 interaction, may explain differences in sequence specificity of the different complexes (PubMed:18539116, PubMed:18583962). Interacts with LHX3 (PubMed:18539116). Interacts (via C-terminus) with POU4F2 (via C-terminus) isoform 1 (PubMed:24643061). Interacts with POU3F2 (PubMed:24643061). Interacts with POU4F3 (PubMed:24643061). Interacts (via N-terminal domain) with MLIP; the interaction represses ISL1 transactivator activity (PubMed:22343712, PubMed:36112854). Interacts with GCN5/KAT2A. Interactions of ISL1 with MLIP1 or KAT2A may be mutually exclusive (PubMed:36112854).</text>
</comment>
<comment type="interaction">
    <interactant intactId="EBI-7988215">
        <id>P61372</id>
    </interactant>
    <interactant intactId="EBI-6272082">
        <id>P70662</id>
        <label>Ldb1</label>
    </interactant>
    <organismsDiffer>false</organismsDiffer>
    <experiments>4</experiments>
</comment>
<comment type="interaction">
    <interactant intactId="EBI-7988215">
        <id>P61372</id>
    </interactant>
    <interactant intactId="EBI-7988290">
        <id>P50481</id>
        <label>Lhx3</label>
    </interactant>
    <organismsDiffer>false</organismsDiffer>
    <experiments>7</experiments>
</comment>
<comment type="subcellular location">
    <molecule>Isoform 1</molecule>
    <subcellularLocation>
        <location evidence="5">Nucleus</location>
    </subcellularLocation>
</comment>
<comment type="subcellular location">
    <molecule>Isoform 2</molecule>
    <subcellularLocation>
        <location evidence="5">Nucleus</location>
    </subcellularLocation>
</comment>
<comment type="alternative products">
    <event type="alternative splicing"/>
    <isoform>
        <id>P61372-1</id>
        <name>1</name>
        <name evidence="12">Isl1-alpha</name>
        <sequence type="displayed"/>
    </isoform>
    <isoform>
        <id>P61372-2</id>
        <name>2</name>
        <name evidence="12">Isl1-beta</name>
        <sequence type="described" ref="VSP_010338"/>
    </isoform>
</comment>
<comment type="developmental stage">
    <text evidence="6 8">Between 7.5 dpc and 8.5 dpc, as the heart tube forms, expressed in splanchnic mesenchyme comprising the mesocardium and adjacent to foregut endoderm as well as in both splanchnic mesoderm and in ventral foregut endoderm. At 10 dpc, continues to be expressed in ventral endoderm and splanchnic mesoderm but is not expressed in the myocardium of the heart (PubMed:14667410). At 10.5 dpc, expressed in cardiomyocytes located in the outflow tract (PubMed:22343712).</text>
</comment>
<comment type="induction">
    <text evidence="11">Down-regulated by beta-catenin/CTNNB1 in mesenchymal stem cells (at protein level). The down-regulation probably proceeds through ubiquitination by WWP1 E3 ubiquitin ligase and protein degradation.</text>
</comment>
<comment type="PTM">
    <text evidence="11">Ubiquitinated probably by WWP1 E3 ubiquitin ligase; ubiquitination is followed by protein degradation.</text>
</comment>
<comment type="PTM">
    <text evidence="5">Isoform 1 is phosphorylated.</text>
</comment>
<comment type="disruption phenotype">
    <text evidence="6 9">Embryonic mutants exhibit growth retardation at approximately 9.5 dpc and die at approximately 10.5 dpc. Between 9.0 dpc and 9.5 dpc hearts are severely abnormal, appear misshapen and unlooped. Hearts are completely missing the outflow tract, right ventricle, and much of the atria (PubMed:14667410). Conditional mutants for retina expression show a decrease in several gene expression levels involved in the differentiation of retinal ganglion cells (RGC) (PubMed:24643061).</text>
</comment>
<comment type="miscellaneous">
    <molecule>Isoform 2</molecule>
    <text evidence="5">Preferentially expressed in insulinoma cell lines. Expression is much lower than that of isoform 1. Shows relatively higher transcriptional activity than isoform 1.</text>
</comment>
<protein>
    <recommendedName>
        <fullName>Insulin gene enhancer protein ISL-1</fullName>
        <shortName>Islet-1</shortName>
    </recommendedName>
</protein>
<reference key="1">
    <citation type="journal article" date="2003" name="J. Mol. Endocrinol.">
        <title>Isolation and characterization of an alternatively spliced variant of transcription factor Islet-1.</title>
        <authorList>
            <person name="Ando K."/>
            <person name="Shioda S."/>
            <person name="Handa H."/>
            <person name="Kataoka K."/>
        </authorList>
    </citation>
    <scope>NUCLEOTIDE SEQUENCE [MRNA] (ISOFORM 1)</scope>
    <scope>FUNCTION</scope>
    <scope>ALTERNATIVE SPLICING</scope>
    <scope>SUBCELLULAR LOCATION (ISOFORMS 1 AND 2)</scope>
    <scope>PHOSPHORYLATION (ISOFORM 1)</scope>
</reference>
<reference key="2">
    <citation type="submission" date="1999-03" db="EMBL/GenBank/DDBJ databases">
        <title>Mouse Isl1 cDNA.</title>
        <authorList>
            <person name="Koehler K."/>
            <person name="Dear T.N."/>
        </authorList>
    </citation>
    <scope>NUCLEOTIDE SEQUENCE [MRNA] (ISOFORM 2)</scope>
    <source>
        <strain>C57BL/6J</strain>
    </source>
</reference>
<reference key="3">
    <citation type="journal article" date="2003" name="Dev. Cell">
        <title>Isl1 identifies a cardiac progenitor population that proliferates prior to differentiation and contributes a majority of cells to the heart.</title>
        <authorList>
            <person name="Cai C.L."/>
            <person name="Liang X."/>
            <person name="Shi Y."/>
            <person name="Chu P.H."/>
            <person name="Pfaff S.L."/>
            <person name="Chen J."/>
            <person name="Evans S."/>
        </authorList>
    </citation>
    <scope>FUNCTION</scope>
    <scope>DISRUPTION PHENOTYPE</scope>
    <scope>DEVELOPMENTAL STAGE</scope>
</reference>
<reference key="4">
    <citation type="journal article" date="2008" name="Dev. Cell">
        <title>A regulatory network to segregate the identity of neuronal subtypes.</title>
        <authorList>
            <person name="Lee S."/>
            <person name="Lee B."/>
            <person name="Joshi K."/>
            <person name="Pfaff S.L."/>
            <person name="Lee J.W."/>
            <person name="Lee S.K."/>
        </authorList>
    </citation>
    <scope>FUNCTION</scope>
    <scope>INTERACTION WITH LHX3</scope>
</reference>
<reference key="5">
    <citation type="journal article" date="2012" name="Circ. Res.">
        <title>CIP, a cardiac Isl1-interacting protein, represses cardiomyocyte hypertrophy.</title>
        <authorList>
            <person name="Huang Z.P."/>
            <person name="Young Seok H."/>
            <person name="Zhou B."/>
            <person name="Chen J."/>
            <person name="Chen J.F."/>
            <person name="Tao Y."/>
            <person name="Pu W.T."/>
            <person name="Wang D.Z."/>
        </authorList>
    </citation>
    <scope>FUNCTION</scope>
    <scope>DEVELOPMENTAL STAGE</scope>
    <scope>INTERACTION WITH MLIP</scope>
</reference>
<reference key="6">
    <citation type="journal article" date="2014" name="PLoS ONE">
        <title>Isl1 and Pou4f2 form a complex to regulate target genes in developing retinal ganglion cells.</title>
        <authorList>
            <person name="Li R."/>
            <person name="Wu F."/>
            <person name="Ruonala R."/>
            <person name="Sapkota D."/>
            <person name="Hu Z."/>
            <person name="Mu X."/>
        </authorList>
    </citation>
    <scope>FUNCTION</scope>
    <scope>DNA-BINDING</scope>
    <scope>INTERACTION WITH POU3F2; POU4F2 AND POU4F3</scope>
    <scope>DISRUPTION PHENOTYPE</scope>
</reference>
<reference key="7">
    <citation type="journal article" date="2015" name="Proc. Natl. Acad. Sci. U.S.A.">
        <title>Two transcription factors, Pou4f2 and Isl1, are sufficient to specify the retinal ganglion cell fate.</title>
        <authorList>
            <person name="Wu F."/>
            <person name="Kaczynski T.J."/>
            <person name="Sethuramanujam S."/>
            <person name="Li R."/>
            <person name="Jain V."/>
            <person name="Slaughter M."/>
            <person name="Mu X."/>
        </authorList>
    </citation>
    <scope>FUNCTION</scope>
</reference>
<reference key="8">
    <citation type="journal article" date="2022" name="Exp. Biol. Med. (Maywood)">
        <title>The effects of beta-catenin on cardiomyogenesis via Islet-1 and MLIP ubiquitination.</title>
        <authorList>
            <person name="Yan L."/>
            <person name="Xie M."/>
            <person name="Tan B."/>
            <person name="Xu H."/>
            <person name="Yi Q."/>
            <person name="Ye L."/>
            <person name="Zhang X."/>
            <person name="Zhang Y."/>
            <person name="Tian J."/>
            <person name="Zhu J."/>
        </authorList>
    </citation>
    <scope>INTERACTION WITH KAT2A AND MLIP</scope>
    <scope>INDUCTION BY CTNNB1</scope>
    <scope>UBIQUITINATION</scope>
</reference>
<reference key="9">
    <citation type="journal article" date="2008" name="EMBO J.">
        <title>Implementing the LIM code: the structural basis for cell type-specific assembly of LIM-homeodomain complexes.</title>
        <authorList>
            <person name="Bhati M."/>
            <person name="Lee C."/>
            <person name="Nancarrow A.L."/>
            <person name="Lee M."/>
            <person name="Craig V.J."/>
            <person name="Bach I."/>
            <person name="Guss J.M."/>
            <person name="Mackay J.P."/>
            <person name="Matthews J.M."/>
        </authorList>
    </citation>
    <scope>X-RAY CRYSTALLOGRAPHY (2.05 ANGSTROMS) OF 262-291 IN COMPLEX WITH LHX3</scope>
    <scope>FUNCTION</scope>
</reference>
<evidence type="ECO:0000250" key="1">
    <source>
        <dbReference type="UniProtKB" id="P61374"/>
    </source>
</evidence>
<evidence type="ECO:0000255" key="2">
    <source>
        <dbReference type="PROSITE-ProRule" id="PRU00108"/>
    </source>
</evidence>
<evidence type="ECO:0000255" key="3">
    <source>
        <dbReference type="PROSITE-ProRule" id="PRU00125"/>
    </source>
</evidence>
<evidence type="ECO:0000256" key="4">
    <source>
        <dbReference type="SAM" id="MobiDB-lite"/>
    </source>
</evidence>
<evidence type="ECO:0000269" key="5">
    <source>
    </source>
</evidence>
<evidence type="ECO:0000269" key="6">
    <source>
    </source>
</evidence>
<evidence type="ECO:0000269" key="7">
    <source>
    </source>
</evidence>
<evidence type="ECO:0000269" key="8">
    <source>
    </source>
</evidence>
<evidence type="ECO:0000269" key="9">
    <source>
    </source>
</evidence>
<evidence type="ECO:0000269" key="10">
    <source>
    </source>
</evidence>
<evidence type="ECO:0000269" key="11">
    <source>
    </source>
</evidence>
<evidence type="ECO:0000303" key="12">
    <source>
    </source>
</evidence>
<evidence type="ECO:0007829" key="13">
    <source>
        <dbReference type="PDB" id="2RGT"/>
    </source>
</evidence>
<evidence type="ECO:0007829" key="14">
    <source>
        <dbReference type="PDB" id="4JCJ"/>
    </source>
</evidence>
<accession>P61372</accession>
<accession>P20663</accession>
<accession>P47894</accession>
<accession>Q812D8</accession>
<name>ISL1_MOUSE</name>
<dbReference type="EMBL" id="AB104633">
    <property type="protein sequence ID" value="BAC57891.1"/>
    <property type="molecule type" value="mRNA"/>
</dbReference>
<dbReference type="EMBL" id="AJ132765">
    <property type="protein sequence ID" value="CAB38446.1"/>
    <property type="molecule type" value="mRNA"/>
</dbReference>
<dbReference type="CCDS" id="CCDS26790.1">
    <molecule id="P61372-1"/>
</dbReference>
<dbReference type="RefSeq" id="NP_067434.3">
    <molecule id="P61372-1"/>
    <property type="nucleotide sequence ID" value="NM_021459.4"/>
</dbReference>
<dbReference type="RefSeq" id="XP_006517596.1">
    <property type="nucleotide sequence ID" value="XM_006517533.2"/>
</dbReference>
<dbReference type="PDB" id="2RGT">
    <property type="method" value="X-ray"/>
    <property type="resolution" value="2.05 A"/>
    <property type="chains" value="A/B=262-291"/>
</dbReference>
<dbReference type="PDB" id="4JCJ">
    <property type="method" value="X-ray"/>
    <property type="resolution" value="3.00 A"/>
    <property type="chains" value="A/B/C=123-138"/>
</dbReference>
<dbReference type="PDBsum" id="2RGT"/>
<dbReference type="PDBsum" id="4JCJ"/>
<dbReference type="SASBDB" id="P61372"/>
<dbReference type="SMR" id="P61372"/>
<dbReference type="BioGRID" id="200812">
    <property type="interactions" value="8"/>
</dbReference>
<dbReference type="CORUM" id="P61372"/>
<dbReference type="FunCoup" id="P61372">
    <property type="interactions" value="906"/>
</dbReference>
<dbReference type="IntAct" id="P61372">
    <property type="interactions" value="4"/>
</dbReference>
<dbReference type="MINT" id="P61372"/>
<dbReference type="STRING" id="10090.ENSMUSP00000044879"/>
<dbReference type="iPTMnet" id="P61372"/>
<dbReference type="PhosphoSitePlus" id="P61372"/>
<dbReference type="PaxDb" id="10090-ENSMUSP00000044879"/>
<dbReference type="ProteomicsDB" id="269000">
    <molecule id="P61372-1"/>
</dbReference>
<dbReference type="ProteomicsDB" id="269001">
    <molecule id="P61372-2"/>
</dbReference>
<dbReference type="Antibodypedia" id="23291">
    <property type="antibodies" value="612 antibodies from 37 providers"/>
</dbReference>
<dbReference type="DNASU" id="16392"/>
<dbReference type="Ensembl" id="ENSMUST00000036060.13">
    <molecule id="P61372-1"/>
    <property type="protein sequence ID" value="ENSMUSP00000044879.7"/>
    <property type="gene ID" value="ENSMUSG00000042258.14"/>
</dbReference>
<dbReference type="Ensembl" id="ENSMUST00000176044.3">
    <molecule id="P61372-2"/>
    <property type="protein sequence ID" value="ENSMUSP00000135567.2"/>
    <property type="gene ID" value="ENSMUSG00000042258.14"/>
</dbReference>
<dbReference type="GeneID" id="16392"/>
<dbReference type="KEGG" id="mmu:16392"/>
<dbReference type="UCSC" id="uc007rye.2">
    <molecule id="P61372-1"/>
    <property type="organism name" value="mouse"/>
</dbReference>
<dbReference type="UCSC" id="uc007ryf.2">
    <molecule id="P61372-2"/>
    <property type="organism name" value="mouse"/>
</dbReference>
<dbReference type="AGR" id="MGI:101791"/>
<dbReference type="CTD" id="3670"/>
<dbReference type="MGI" id="MGI:101791">
    <property type="gene designation" value="Isl1"/>
</dbReference>
<dbReference type="VEuPathDB" id="HostDB:ENSMUSG00000042258"/>
<dbReference type="eggNOG" id="KOG0490">
    <property type="taxonomic scope" value="Eukaryota"/>
</dbReference>
<dbReference type="GeneTree" id="ENSGT00940000153731"/>
<dbReference type="HOGENOM" id="CLU_027802_2_0_1"/>
<dbReference type="InParanoid" id="P61372"/>
<dbReference type="OMA" id="SPMHGNR"/>
<dbReference type="OrthoDB" id="125004at2759"/>
<dbReference type="PhylomeDB" id="P61372"/>
<dbReference type="TreeFam" id="TF315442"/>
<dbReference type="BioGRID-ORCS" id="16392">
    <property type="hits" value="1 hit in 79 CRISPR screens"/>
</dbReference>
<dbReference type="ChiTaRS" id="Isl1">
    <property type="organism name" value="mouse"/>
</dbReference>
<dbReference type="EvolutionaryTrace" id="P61372"/>
<dbReference type="PRO" id="PR:P61372"/>
<dbReference type="Proteomes" id="UP000000589">
    <property type="component" value="Chromosome 13"/>
</dbReference>
<dbReference type="RNAct" id="P61372">
    <property type="molecule type" value="protein"/>
</dbReference>
<dbReference type="Bgee" id="ENSMUSG00000042258">
    <property type="expression patterns" value="Expressed in superior cervical ganglion and 226 other cell types or tissues"/>
</dbReference>
<dbReference type="ExpressionAtlas" id="P61372">
    <property type="expression patterns" value="baseline and differential"/>
</dbReference>
<dbReference type="GO" id="GO:0000785">
    <property type="term" value="C:chromatin"/>
    <property type="evidence" value="ECO:0000314"/>
    <property type="project" value="UniProtKB"/>
</dbReference>
<dbReference type="GO" id="GO:0005737">
    <property type="term" value="C:cytoplasm"/>
    <property type="evidence" value="ECO:0007669"/>
    <property type="project" value="Ensembl"/>
</dbReference>
<dbReference type="GO" id="GO:0005654">
    <property type="term" value="C:nucleoplasm"/>
    <property type="evidence" value="ECO:0000304"/>
    <property type="project" value="Reactome"/>
</dbReference>
<dbReference type="GO" id="GO:0005634">
    <property type="term" value="C:nucleus"/>
    <property type="evidence" value="ECO:0000314"/>
    <property type="project" value="UniProtKB"/>
</dbReference>
<dbReference type="GO" id="GO:0005667">
    <property type="term" value="C:transcription regulator complex"/>
    <property type="evidence" value="ECO:0007669"/>
    <property type="project" value="Ensembl"/>
</dbReference>
<dbReference type="GO" id="GO:0043425">
    <property type="term" value="F:bHLH transcription factor binding"/>
    <property type="evidence" value="ECO:0007669"/>
    <property type="project" value="Ensembl"/>
</dbReference>
<dbReference type="GO" id="GO:0003682">
    <property type="term" value="F:chromatin binding"/>
    <property type="evidence" value="ECO:0000314"/>
    <property type="project" value="MGI"/>
</dbReference>
<dbReference type="GO" id="GO:0001046">
    <property type="term" value="F:core promoter sequence-specific DNA binding"/>
    <property type="evidence" value="ECO:0007669"/>
    <property type="project" value="Ensembl"/>
</dbReference>
<dbReference type="GO" id="GO:0003677">
    <property type="term" value="F:DNA binding"/>
    <property type="evidence" value="ECO:0000314"/>
    <property type="project" value="MGI"/>
</dbReference>
<dbReference type="GO" id="GO:0001228">
    <property type="term" value="F:DNA-binding transcription activator activity, RNA polymerase II-specific"/>
    <property type="evidence" value="ECO:0000314"/>
    <property type="project" value="MGI"/>
</dbReference>
<dbReference type="GO" id="GO:0030274">
    <property type="term" value="F:LIM domain binding"/>
    <property type="evidence" value="ECO:0007669"/>
    <property type="project" value="Ensembl"/>
</dbReference>
<dbReference type="GO" id="GO:0046872">
    <property type="term" value="F:metal ion binding"/>
    <property type="evidence" value="ECO:0007669"/>
    <property type="project" value="UniProtKB-KW"/>
</dbReference>
<dbReference type="GO" id="GO:0030331">
    <property type="term" value="F:nuclear estrogen receptor binding"/>
    <property type="evidence" value="ECO:0007669"/>
    <property type="project" value="Ensembl"/>
</dbReference>
<dbReference type="GO" id="GO:1990841">
    <property type="term" value="F:promoter-specific chromatin binding"/>
    <property type="evidence" value="ECO:0000314"/>
    <property type="project" value="UniProtKB"/>
</dbReference>
<dbReference type="GO" id="GO:0000978">
    <property type="term" value="F:RNA polymerase II cis-regulatory region sequence-specific DNA binding"/>
    <property type="evidence" value="ECO:0007669"/>
    <property type="project" value="Ensembl"/>
</dbReference>
<dbReference type="GO" id="GO:0043565">
    <property type="term" value="F:sequence-specific DNA binding"/>
    <property type="evidence" value="ECO:0000314"/>
    <property type="project" value="UniProtKB"/>
</dbReference>
<dbReference type="GO" id="GO:0000976">
    <property type="term" value="F:transcription cis-regulatory region binding"/>
    <property type="evidence" value="ECO:0000314"/>
    <property type="project" value="UniProtKB"/>
</dbReference>
<dbReference type="GO" id="GO:0060413">
    <property type="term" value="P:atrial septum morphogenesis"/>
    <property type="evidence" value="ECO:0000316"/>
    <property type="project" value="BHF-UCL"/>
</dbReference>
<dbReference type="GO" id="GO:0031103">
    <property type="term" value="P:axon regeneration"/>
    <property type="evidence" value="ECO:0007669"/>
    <property type="project" value="Ensembl"/>
</dbReference>
<dbReference type="GO" id="GO:0060070">
    <property type="term" value="P:canonical Wnt signaling pathway"/>
    <property type="evidence" value="ECO:0000316"/>
    <property type="project" value="MGI"/>
</dbReference>
<dbReference type="GO" id="GO:0060913">
    <property type="term" value="P:cardiac cell fate determination"/>
    <property type="evidence" value="ECO:0000315"/>
    <property type="project" value="MGI"/>
</dbReference>
<dbReference type="GO" id="GO:0060379">
    <property type="term" value="P:cardiac muscle cell myoblast differentiation"/>
    <property type="evidence" value="ECO:0000315"/>
    <property type="project" value="MGI"/>
</dbReference>
<dbReference type="GO" id="GO:0003215">
    <property type="term" value="P:cardiac right ventricle morphogenesis"/>
    <property type="evidence" value="ECO:0000316"/>
    <property type="project" value="BHF-UCL"/>
</dbReference>
<dbReference type="GO" id="GO:0008283">
    <property type="term" value="P:cell population proliferation"/>
    <property type="evidence" value="ECO:0000314"/>
    <property type="project" value="MGI"/>
</dbReference>
<dbReference type="GO" id="GO:0071385">
    <property type="term" value="P:cellular response to glucocorticoid stimulus"/>
    <property type="evidence" value="ECO:0007669"/>
    <property type="project" value="Ensembl"/>
</dbReference>
<dbReference type="GO" id="GO:0071560">
    <property type="term" value="P:cellular response to transforming growth factor beta stimulus"/>
    <property type="evidence" value="ECO:0007669"/>
    <property type="project" value="Ensembl"/>
</dbReference>
<dbReference type="GO" id="GO:0003203">
    <property type="term" value="P:endocardial cushion morphogenesis"/>
    <property type="evidence" value="ECO:0000316"/>
    <property type="project" value="BHF-UCL"/>
</dbReference>
<dbReference type="GO" id="GO:0007507">
    <property type="term" value="P:heart development"/>
    <property type="evidence" value="ECO:0000315"/>
    <property type="project" value="MGI"/>
</dbReference>
<dbReference type="GO" id="GO:0003007">
    <property type="term" value="P:heart morphogenesis"/>
    <property type="evidence" value="ECO:0000316"/>
    <property type="project" value="MGI"/>
</dbReference>
<dbReference type="GO" id="GO:0060384">
    <property type="term" value="P:innervation"/>
    <property type="evidence" value="ECO:0000315"/>
    <property type="project" value="BHF-UCL"/>
</dbReference>
<dbReference type="GO" id="GO:0048762">
    <property type="term" value="P:mesenchymal cell differentiation"/>
    <property type="evidence" value="ECO:0000315"/>
    <property type="project" value="MGI"/>
</dbReference>
<dbReference type="GO" id="GO:0090090">
    <property type="term" value="P:negative regulation of canonical Wnt signaling pathway"/>
    <property type="evidence" value="ECO:0000316"/>
    <property type="project" value="MGI"/>
</dbReference>
<dbReference type="GO" id="GO:0045892">
    <property type="term" value="P:negative regulation of DNA-templated transcription"/>
    <property type="evidence" value="ECO:0000250"/>
    <property type="project" value="UniProtKB"/>
</dbReference>
<dbReference type="GO" id="GO:0050680">
    <property type="term" value="P:negative regulation of epithelial cell proliferation"/>
    <property type="evidence" value="ECO:0007669"/>
    <property type="project" value="Ensembl"/>
</dbReference>
<dbReference type="GO" id="GO:0050728">
    <property type="term" value="P:negative regulation of inflammatory response"/>
    <property type="evidence" value="ECO:0000315"/>
    <property type="project" value="BHF-UCL"/>
</dbReference>
<dbReference type="GO" id="GO:0033147">
    <property type="term" value="P:negative regulation of intracellular estrogen receptor signaling pathway"/>
    <property type="evidence" value="ECO:0007669"/>
    <property type="project" value="Ensembl"/>
</dbReference>
<dbReference type="GO" id="GO:0072201">
    <property type="term" value="P:negative regulation of mesenchymal cell proliferation"/>
    <property type="evidence" value="ECO:0007669"/>
    <property type="project" value="Ensembl"/>
</dbReference>
<dbReference type="GO" id="GO:0043524">
    <property type="term" value="P:negative regulation of neuron apoptotic process"/>
    <property type="evidence" value="ECO:0000315"/>
    <property type="project" value="BHF-UCL"/>
</dbReference>
<dbReference type="GO" id="GO:0045665">
    <property type="term" value="P:negative regulation of neuron differentiation"/>
    <property type="evidence" value="ECO:0000316"/>
    <property type="project" value="MGI"/>
</dbReference>
<dbReference type="GO" id="GO:0031333">
    <property type="term" value="P:negative regulation of protein-containing complex assembly"/>
    <property type="evidence" value="ECO:0007669"/>
    <property type="project" value="Ensembl"/>
</dbReference>
<dbReference type="GO" id="GO:0000122">
    <property type="term" value="P:negative regulation of transcription by RNA polymerase II"/>
    <property type="evidence" value="ECO:0000315"/>
    <property type="project" value="BHF-UCL"/>
</dbReference>
<dbReference type="GO" id="GO:0001755">
    <property type="term" value="P:neural crest cell migration"/>
    <property type="evidence" value="ECO:0000316"/>
    <property type="project" value="MGI"/>
</dbReference>
<dbReference type="GO" id="GO:0030182">
    <property type="term" value="P:neuron differentiation"/>
    <property type="evidence" value="ECO:0000315"/>
    <property type="project" value="MGI"/>
</dbReference>
<dbReference type="GO" id="GO:0048663">
    <property type="term" value="P:neuron fate commitment"/>
    <property type="evidence" value="ECO:0000316"/>
    <property type="project" value="MGI"/>
</dbReference>
<dbReference type="GO" id="GO:0048665">
    <property type="term" value="P:neuron fate specification"/>
    <property type="evidence" value="ECO:0000315"/>
    <property type="project" value="BHF-UCL"/>
</dbReference>
<dbReference type="GO" id="GO:0003151">
    <property type="term" value="P:outflow tract morphogenesis"/>
    <property type="evidence" value="ECO:0000316"/>
    <property type="project" value="BHF-UCL"/>
</dbReference>
<dbReference type="GO" id="GO:0003148">
    <property type="term" value="P:outflow tract septum morphogenesis"/>
    <property type="evidence" value="ECO:0000316"/>
    <property type="project" value="BHF-UCL"/>
</dbReference>
<dbReference type="GO" id="GO:0031016">
    <property type="term" value="P:pancreas development"/>
    <property type="evidence" value="ECO:0000315"/>
    <property type="project" value="MGI"/>
</dbReference>
<dbReference type="GO" id="GO:0048936">
    <property type="term" value="P:peripheral nervous system neuron axonogenesis"/>
    <property type="evidence" value="ECO:0000315"/>
    <property type="project" value="BHF-UCL"/>
</dbReference>
<dbReference type="GO" id="GO:0048935">
    <property type="term" value="P:peripheral nervous system neuron development"/>
    <property type="evidence" value="ECO:0000316"/>
    <property type="project" value="MGI"/>
</dbReference>
<dbReference type="GO" id="GO:0060037">
    <property type="term" value="P:pharyngeal system development"/>
    <property type="evidence" value="ECO:0000316"/>
    <property type="project" value="BHF-UCL"/>
</dbReference>
<dbReference type="GO" id="GO:0021983">
    <property type="term" value="P:pituitary gland development"/>
    <property type="evidence" value="ECO:0000315"/>
    <property type="project" value="MGI"/>
</dbReference>
<dbReference type="GO" id="GO:0045766">
    <property type="term" value="P:positive regulation of angiogenesis"/>
    <property type="evidence" value="ECO:0000315"/>
    <property type="project" value="BHF-UCL"/>
</dbReference>
<dbReference type="GO" id="GO:0090280">
    <property type="term" value="P:positive regulation of calcium ion import"/>
    <property type="evidence" value="ECO:0007669"/>
    <property type="project" value="Ensembl"/>
</dbReference>
<dbReference type="GO" id="GO:0045597">
    <property type="term" value="P:positive regulation of cell differentiation"/>
    <property type="evidence" value="ECO:0000315"/>
    <property type="project" value="UniProtKB"/>
</dbReference>
<dbReference type="GO" id="GO:0008284">
    <property type="term" value="P:positive regulation of cell population proliferation"/>
    <property type="evidence" value="ECO:0000314"/>
    <property type="project" value="MGI"/>
</dbReference>
<dbReference type="GO" id="GO:0010718">
    <property type="term" value="P:positive regulation of epithelial to mesenchymal transition"/>
    <property type="evidence" value="ECO:0007669"/>
    <property type="project" value="Ensembl"/>
</dbReference>
<dbReference type="GO" id="GO:0071657">
    <property type="term" value="P:positive regulation of granulocyte colony-stimulating factor production"/>
    <property type="evidence" value="ECO:0000314"/>
    <property type="project" value="BHF-UCL"/>
</dbReference>
<dbReference type="GO" id="GO:0032725">
    <property type="term" value="P:positive regulation of granulocyte macrophage colony-stimulating factor production"/>
    <property type="evidence" value="ECO:0000314"/>
    <property type="project" value="BHF-UCL"/>
</dbReference>
<dbReference type="GO" id="GO:0032024">
    <property type="term" value="P:positive regulation of insulin secretion"/>
    <property type="evidence" value="ECO:0007669"/>
    <property type="project" value="Ensembl"/>
</dbReference>
<dbReference type="GO" id="GO:0032730">
    <property type="term" value="P:positive regulation of interleukin-1 alpha production"/>
    <property type="evidence" value="ECO:0000314"/>
    <property type="project" value="BHF-UCL"/>
</dbReference>
<dbReference type="GO" id="GO:0032731">
    <property type="term" value="P:positive regulation of interleukin-1 beta production"/>
    <property type="evidence" value="ECO:0000314"/>
    <property type="project" value="BHF-UCL"/>
</dbReference>
<dbReference type="GO" id="GO:0032735">
    <property type="term" value="P:positive regulation of interleukin-12 production"/>
    <property type="evidence" value="ECO:0000314"/>
    <property type="project" value="BHF-UCL"/>
</dbReference>
<dbReference type="GO" id="GO:0032755">
    <property type="term" value="P:positive regulation of interleukin-6 production"/>
    <property type="evidence" value="ECO:0000314"/>
    <property type="project" value="BHF-UCL"/>
</dbReference>
<dbReference type="GO" id="GO:1901258">
    <property type="term" value="P:positive regulation of macrophage colony-stimulating factor production"/>
    <property type="evidence" value="ECO:0000314"/>
    <property type="project" value="BHF-UCL"/>
</dbReference>
<dbReference type="GO" id="GO:0045880">
    <property type="term" value="P:positive regulation of smoothened signaling pathway"/>
    <property type="evidence" value="ECO:0007669"/>
    <property type="project" value="Ensembl"/>
</dbReference>
<dbReference type="GO" id="GO:0045944">
    <property type="term" value="P:positive regulation of transcription by RNA polymerase II"/>
    <property type="evidence" value="ECO:0000314"/>
    <property type="project" value="MGI"/>
</dbReference>
<dbReference type="GO" id="GO:0032760">
    <property type="term" value="P:positive regulation of tumor necrosis factor production"/>
    <property type="evidence" value="ECO:0000314"/>
    <property type="project" value="BHF-UCL"/>
</dbReference>
<dbReference type="GO" id="GO:2000676">
    <property type="term" value="P:positive regulation of type B pancreatic cell apoptotic process"/>
    <property type="evidence" value="ECO:0007669"/>
    <property type="project" value="Ensembl"/>
</dbReference>
<dbReference type="GO" id="GO:0032729">
    <property type="term" value="P:positive regulation of type II interferon production"/>
    <property type="evidence" value="ECO:0000314"/>
    <property type="project" value="BHF-UCL"/>
</dbReference>
<dbReference type="GO" id="GO:0010575">
    <property type="term" value="P:positive regulation of vascular endothelial growth factor production"/>
    <property type="evidence" value="ECO:0000314"/>
    <property type="project" value="BHF-UCL"/>
</dbReference>
<dbReference type="GO" id="GO:0010468">
    <property type="term" value="P:regulation of gene expression"/>
    <property type="evidence" value="ECO:0000315"/>
    <property type="project" value="MGI"/>
</dbReference>
<dbReference type="GO" id="GO:0086091">
    <property type="term" value="P:regulation of heart rate by cardiac conduction"/>
    <property type="evidence" value="ECO:0000315"/>
    <property type="project" value="BHF-UCL"/>
</dbReference>
<dbReference type="GO" id="GO:0003266">
    <property type="term" value="P:regulation of secondary heart field cardioblast proliferation"/>
    <property type="evidence" value="ECO:0000315"/>
    <property type="project" value="MGI"/>
</dbReference>
<dbReference type="GO" id="GO:0031290">
    <property type="term" value="P:retinal ganglion cell axon guidance"/>
    <property type="evidence" value="ECO:0000315"/>
    <property type="project" value="MGI"/>
</dbReference>
<dbReference type="GO" id="GO:0003139">
    <property type="term" value="P:secondary heart field specification"/>
    <property type="evidence" value="ECO:0007669"/>
    <property type="project" value="Ensembl"/>
</dbReference>
<dbReference type="GO" id="GO:0048880">
    <property type="term" value="P:sensory system development"/>
    <property type="evidence" value="ECO:0000315"/>
    <property type="project" value="BHF-UCL"/>
</dbReference>
<dbReference type="GO" id="GO:0060931">
    <property type="term" value="P:sinoatrial node cell development"/>
    <property type="evidence" value="ECO:0000315"/>
    <property type="project" value="BHF-UCL"/>
</dbReference>
<dbReference type="GO" id="GO:0021520">
    <property type="term" value="P:spinal cord motor neuron cell fate specification"/>
    <property type="evidence" value="ECO:0000316"/>
    <property type="project" value="MGI"/>
</dbReference>
<dbReference type="GO" id="GO:0021522">
    <property type="term" value="P:spinal cord motor neuron differentiation"/>
    <property type="evidence" value="ECO:0000315"/>
    <property type="project" value="MGI"/>
</dbReference>
<dbReference type="GO" id="GO:0048863">
    <property type="term" value="P:stem cell differentiation"/>
    <property type="evidence" value="ECO:0000315"/>
    <property type="project" value="MGI"/>
</dbReference>
<dbReference type="GO" id="GO:0006366">
    <property type="term" value="P:transcription by RNA polymerase II"/>
    <property type="evidence" value="ECO:0000314"/>
    <property type="project" value="MGI"/>
</dbReference>
<dbReference type="GO" id="GO:0021559">
    <property type="term" value="P:trigeminal nerve development"/>
    <property type="evidence" value="ECO:0000315"/>
    <property type="project" value="BHF-UCL"/>
</dbReference>
<dbReference type="GO" id="GO:0055010">
    <property type="term" value="P:ventricular cardiac muscle tissue morphogenesis"/>
    <property type="evidence" value="ECO:0000316"/>
    <property type="project" value="BHF-UCL"/>
</dbReference>
<dbReference type="GO" id="GO:0021524">
    <property type="term" value="P:visceral motor neuron differentiation"/>
    <property type="evidence" value="ECO:0000316"/>
    <property type="project" value="MGI"/>
</dbReference>
<dbReference type="CDD" id="cd00086">
    <property type="entry name" value="homeodomain"/>
    <property type="match status" value="1"/>
</dbReference>
<dbReference type="CDD" id="cd09366">
    <property type="entry name" value="LIM1_Isl"/>
    <property type="match status" value="1"/>
</dbReference>
<dbReference type="CDD" id="cd09374">
    <property type="entry name" value="LIM2_Isl"/>
    <property type="match status" value="1"/>
</dbReference>
<dbReference type="FunFam" id="2.10.110.10:FF:000034">
    <property type="entry name" value="Insulin gene enhancer protein ISL"/>
    <property type="match status" value="1"/>
</dbReference>
<dbReference type="FunFam" id="1.10.10.60:FF:000041">
    <property type="entry name" value="insulin gene enhancer protein ISL-1"/>
    <property type="match status" value="1"/>
</dbReference>
<dbReference type="FunFam" id="2.10.110.10:FF:000056">
    <property type="entry name" value="insulin gene enhancer protein ISL-1"/>
    <property type="match status" value="1"/>
</dbReference>
<dbReference type="Gene3D" id="2.10.110.10">
    <property type="entry name" value="Cysteine Rich Protein"/>
    <property type="match status" value="2"/>
</dbReference>
<dbReference type="Gene3D" id="1.10.10.60">
    <property type="entry name" value="Homeodomain-like"/>
    <property type="match status" value="1"/>
</dbReference>
<dbReference type="IDEAL" id="IID50047"/>
<dbReference type="InterPro" id="IPR001356">
    <property type="entry name" value="HD"/>
</dbReference>
<dbReference type="InterPro" id="IPR017970">
    <property type="entry name" value="Homeobox_CS"/>
</dbReference>
<dbReference type="InterPro" id="IPR009057">
    <property type="entry name" value="Homeodomain-like_sf"/>
</dbReference>
<dbReference type="InterPro" id="IPR047169">
    <property type="entry name" value="ISL1/2-like"/>
</dbReference>
<dbReference type="InterPro" id="IPR047244">
    <property type="entry name" value="ISL1/2-like_LIM1"/>
</dbReference>
<dbReference type="InterPro" id="IPR001781">
    <property type="entry name" value="Znf_LIM"/>
</dbReference>
<dbReference type="PANTHER" id="PTHR24204">
    <property type="entry name" value="INSULIN GENE ENHANCER PROTEIN"/>
    <property type="match status" value="1"/>
</dbReference>
<dbReference type="PANTHER" id="PTHR24204:SF4">
    <property type="entry name" value="INSULIN GENE ENHANCER PROTEIN ISL-1"/>
    <property type="match status" value="1"/>
</dbReference>
<dbReference type="Pfam" id="PF00046">
    <property type="entry name" value="Homeodomain"/>
    <property type="match status" value="1"/>
</dbReference>
<dbReference type="Pfam" id="PF00412">
    <property type="entry name" value="LIM"/>
    <property type="match status" value="2"/>
</dbReference>
<dbReference type="SMART" id="SM00389">
    <property type="entry name" value="HOX"/>
    <property type="match status" value="1"/>
</dbReference>
<dbReference type="SMART" id="SM00132">
    <property type="entry name" value="LIM"/>
    <property type="match status" value="2"/>
</dbReference>
<dbReference type="SUPFAM" id="SSF57716">
    <property type="entry name" value="Glucocorticoid receptor-like (DNA-binding domain)"/>
    <property type="match status" value="2"/>
</dbReference>
<dbReference type="SUPFAM" id="SSF46689">
    <property type="entry name" value="Homeodomain-like"/>
    <property type="match status" value="1"/>
</dbReference>
<dbReference type="PROSITE" id="PS00027">
    <property type="entry name" value="HOMEOBOX_1"/>
    <property type="match status" value="1"/>
</dbReference>
<dbReference type="PROSITE" id="PS50071">
    <property type="entry name" value="HOMEOBOX_2"/>
    <property type="match status" value="1"/>
</dbReference>
<dbReference type="PROSITE" id="PS00478">
    <property type="entry name" value="LIM_DOMAIN_1"/>
    <property type="match status" value="2"/>
</dbReference>
<dbReference type="PROSITE" id="PS50023">
    <property type="entry name" value="LIM_DOMAIN_2"/>
    <property type="match status" value="2"/>
</dbReference>